<gene>
    <name evidence="1" type="primary">infA</name>
</gene>
<name>IF1C_VITVI</name>
<evidence type="ECO:0000255" key="1">
    <source>
        <dbReference type="HAMAP-Rule" id="MF_00075"/>
    </source>
</evidence>
<proteinExistence type="inferred from homology"/>
<geneLocation type="chloroplast"/>
<sequence>MKEQKWIHEGLITESLPNGMFRVRLDNENMILGYVSGRIRRSFIRILPGDRVKIEVSRYDSTKGRIIYRIRNKDSNN</sequence>
<keyword id="KW-0150">Chloroplast</keyword>
<keyword id="KW-0396">Initiation factor</keyword>
<keyword id="KW-0934">Plastid</keyword>
<keyword id="KW-0648">Protein biosynthesis</keyword>
<keyword id="KW-1185">Reference proteome</keyword>
<keyword id="KW-0694">RNA-binding</keyword>
<keyword id="KW-0699">rRNA-binding</keyword>
<protein>
    <recommendedName>
        <fullName evidence="1">Translation initiation factor IF-1, chloroplastic</fullName>
    </recommendedName>
</protein>
<reference key="1">
    <citation type="journal article" date="2006" name="BMC Evol. Biol.">
        <title>Phylogenetic analyses of Vitis (Vitaceae) based on complete chloroplast genome sequences: effects of taxon sampling and phylogenetic methods on resolving relationships among rosids.</title>
        <authorList>
            <person name="Jansen R.K."/>
            <person name="Kaittanis C."/>
            <person name="Lee S.-B."/>
            <person name="Saski C."/>
            <person name="Tomkins J."/>
            <person name="Alverson A.J."/>
            <person name="Daniell H."/>
        </authorList>
    </citation>
    <scope>NUCLEOTIDE SEQUENCE [LARGE SCALE GENOMIC DNA]</scope>
    <source>
        <strain>cv. Maxxa</strain>
    </source>
</reference>
<feature type="chain" id="PRO_0000275398" description="Translation initiation factor IF-1, chloroplastic">
    <location>
        <begin position="1"/>
        <end position="77"/>
    </location>
</feature>
<feature type="domain" description="S1-like" evidence="1">
    <location>
        <begin position="1"/>
        <end position="71"/>
    </location>
</feature>
<organism>
    <name type="scientific">Vitis vinifera</name>
    <name type="common">Grape</name>
    <dbReference type="NCBI Taxonomy" id="29760"/>
    <lineage>
        <taxon>Eukaryota</taxon>
        <taxon>Viridiplantae</taxon>
        <taxon>Streptophyta</taxon>
        <taxon>Embryophyta</taxon>
        <taxon>Tracheophyta</taxon>
        <taxon>Spermatophyta</taxon>
        <taxon>Magnoliopsida</taxon>
        <taxon>eudicotyledons</taxon>
        <taxon>Gunneridae</taxon>
        <taxon>Pentapetalae</taxon>
        <taxon>rosids</taxon>
        <taxon>Vitales</taxon>
        <taxon>Vitaceae</taxon>
        <taxon>Viteae</taxon>
        <taxon>Vitis</taxon>
    </lineage>
</organism>
<dbReference type="EMBL" id="DQ424856">
    <property type="protein sequence ID" value="ABE47568.1"/>
    <property type="molecule type" value="Genomic_DNA"/>
</dbReference>
<dbReference type="RefSeq" id="YP_002608403.1">
    <property type="nucleotide sequence ID" value="NC_012119.1"/>
</dbReference>
<dbReference type="RefSeq" id="YP_567112.1">
    <property type="nucleotide sequence ID" value="NC_007957.1"/>
</dbReference>
<dbReference type="SMR" id="Q0ZIY4"/>
<dbReference type="STRING" id="29760.Q0ZIY4"/>
<dbReference type="GeneID" id="4025134"/>
<dbReference type="GeneID" id="7498632"/>
<dbReference type="KEGG" id="vvi:4025134"/>
<dbReference type="KEGG" id="vvi:7498632"/>
<dbReference type="InParanoid" id="Q0ZIY4"/>
<dbReference type="OrthoDB" id="906450at71240"/>
<dbReference type="Proteomes" id="UP000009183">
    <property type="component" value="Chloroplast"/>
</dbReference>
<dbReference type="GO" id="GO:0009507">
    <property type="term" value="C:chloroplast"/>
    <property type="evidence" value="ECO:0007669"/>
    <property type="project" value="UniProtKB-SubCell"/>
</dbReference>
<dbReference type="GO" id="GO:0005829">
    <property type="term" value="C:cytosol"/>
    <property type="evidence" value="ECO:0000318"/>
    <property type="project" value="GO_Central"/>
</dbReference>
<dbReference type="GO" id="GO:0043022">
    <property type="term" value="F:ribosome binding"/>
    <property type="evidence" value="ECO:0000318"/>
    <property type="project" value="GO_Central"/>
</dbReference>
<dbReference type="GO" id="GO:0019843">
    <property type="term" value="F:rRNA binding"/>
    <property type="evidence" value="ECO:0007669"/>
    <property type="project" value="UniProtKB-UniRule"/>
</dbReference>
<dbReference type="GO" id="GO:0003743">
    <property type="term" value="F:translation initiation factor activity"/>
    <property type="evidence" value="ECO:0007669"/>
    <property type="project" value="UniProtKB-UniRule"/>
</dbReference>
<dbReference type="CDD" id="cd04451">
    <property type="entry name" value="S1_IF1"/>
    <property type="match status" value="1"/>
</dbReference>
<dbReference type="FunFam" id="2.40.50.140:FF:000019">
    <property type="entry name" value="Translation initiation factor IF-1, chloroplastic"/>
    <property type="match status" value="1"/>
</dbReference>
<dbReference type="Gene3D" id="2.40.50.140">
    <property type="entry name" value="Nucleic acid-binding proteins"/>
    <property type="match status" value="1"/>
</dbReference>
<dbReference type="HAMAP" id="MF_00075">
    <property type="entry name" value="IF_1"/>
    <property type="match status" value="1"/>
</dbReference>
<dbReference type="InterPro" id="IPR012340">
    <property type="entry name" value="NA-bd_OB-fold"/>
</dbReference>
<dbReference type="InterPro" id="IPR006196">
    <property type="entry name" value="RNA-binding_domain_S1_IF1"/>
</dbReference>
<dbReference type="InterPro" id="IPR003029">
    <property type="entry name" value="S1_domain"/>
</dbReference>
<dbReference type="InterPro" id="IPR004368">
    <property type="entry name" value="TIF_IF1"/>
</dbReference>
<dbReference type="NCBIfam" id="TIGR00008">
    <property type="entry name" value="infA"/>
    <property type="match status" value="1"/>
</dbReference>
<dbReference type="PANTHER" id="PTHR33370">
    <property type="entry name" value="TRANSLATION INITIATION FACTOR IF-1, CHLOROPLASTIC"/>
    <property type="match status" value="1"/>
</dbReference>
<dbReference type="PANTHER" id="PTHR33370:SF1">
    <property type="entry name" value="TRANSLATION INITIATION FACTOR IF-1, CHLOROPLASTIC"/>
    <property type="match status" value="1"/>
</dbReference>
<dbReference type="Pfam" id="PF01176">
    <property type="entry name" value="eIF-1a"/>
    <property type="match status" value="1"/>
</dbReference>
<dbReference type="SMART" id="SM00316">
    <property type="entry name" value="S1"/>
    <property type="match status" value="1"/>
</dbReference>
<dbReference type="SUPFAM" id="SSF50249">
    <property type="entry name" value="Nucleic acid-binding proteins"/>
    <property type="match status" value="1"/>
</dbReference>
<dbReference type="PROSITE" id="PS50832">
    <property type="entry name" value="S1_IF1_TYPE"/>
    <property type="match status" value="1"/>
</dbReference>
<accession>Q0ZIY4</accession>
<comment type="function">
    <text evidence="1">One of the essential components for the initiation of protein synthesis. Stabilizes the binding of IF-2 and IF-3 on the 30S subunit to which N-formylmethionyl-tRNA(fMet) subsequently binds. Helps modulate mRNA selection, yielding the 30S pre-initiation complex (PIC). Upon addition of the 50S ribosomal subunit IF-1, IF-2 and IF-3 are released leaving the mature 70S translation initiation complex.</text>
</comment>
<comment type="subunit">
    <text evidence="1">Component of the 30S ribosomal translation pre-initiation complex which assembles on the 30S ribosome in the order IF-2 and IF-3, IF-1 and N-formylmethionyl-tRNA(fMet); mRNA recruitment can occur at any time during PIC assembly.</text>
</comment>
<comment type="subcellular location">
    <subcellularLocation>
        <location evidence="1">Plastid</location>
        <location evidence="1">Chloroplast</location>
    </subcellularLocation>
</comment>
<comment type="similarity">
    <text evidence="1">Belongs to the IF-1 family.</text>
</comment>